<organism>
    <name type="scientific">Salmonella typhimurium (strain LT2 / SGSC1412 / ATCC 700720)</name>
    <dbReference type="NCBI Taxonomy" id="99287"/>
    <lineage>
        <taxon>Bacteria</taxon>
        <taxon>Pseudomonadati</taxon>
        <taxon>Pseudomonadota</taxon>
        <taxon>Gammaproteobacteria</taxon>
        <taxon>Enterobacterales</taxon>
        <taxon>Enterobacteriaceae</taxon>
        <taxon>Salmonella</taxon>
    </lineage>
</organism>
<gene>
    <name type="primary">rplT</name>
    <name type="ordered locus">STM1336</name>
</gene>
<proteinExistence type="inferred from homology"/>
<reference key="1">
    <citation type="journal article" date="2001" name="Nature">
        <title>Complete genome sequence of Salmonella enterica serovar Typhimurium LT2.</title>
        <authorList>
            <person name="McClelland M."/>
            <person name="Sanderson K.E."/>
            <person name="Spieth J."/>
            <person name="Clifton S.W."/>
            <person name="Latreille P."/>
            <person name="Courtney L."/>
            <person name="Porwollik S."/>
            <person name="Ali J."/>
            <person name="Dante M."/>
            <person name="Du F."/>
            <person name="Hou S."/>
            <person name="Layman D."/>
            <person name="Leonard S."/>
            <person name="Nguyen C."/>
            <person name="Scott K."/>
            <person name="Holmes A."/>
            <person name="Grewal N."/>
            <person name="Mulvaney E."/>
            <person name="Ryan E."/>
            <person name="Sun H."/>
            <person name="Florea L."/>
            <person name="Miller W."/>
            <person name="Stoneking T."/>
            <person name="Nhan M."/>
            <person name="Waterston R."/>
            <person name="Wilson R.K."/>
        </authorList>
    </citation>
    <scope>NUCLEOTIDE SEQUENCE [LARGE SCALE GENOMIC DNA]</scope>
    <source>
        <strain>LT2 / SGSC1412 / ATCC 700720</strain>
    </source>
</reference>
<dbReference type="EMBL" id="AE006468">
    <property type="protein sequence ID" value="AAL20261.1"/>
    <property type="molecule type" value="Genomic_DNA"/>
</dbReference>
<dbReference type="RefSeq" id="NP_460302.1">
    <property type="nucleotide sequence ID" value="NC_003197.2"/>
</dbReference>
<dbReference type="RefSeq" id="WP_000124850.1">
    <property type="nucleotide sequence ID" value="NC_003197.2"/>
</dbReference>
<dbReference type="SMR" id="P0A7L6"/>
<dbReference type="STRING" id="99287.STM1336"/>
<dbReference type="PaxDb" id="99287-STM1336"/>
<dbReference type="GeneID" id="1252854"/>
<dbReference type="GeneID" id="98388757"/>
<dbReference type="KEGG" id="stm:STM1336"/>
<dbReference type="PATRIC" id="fig|99287.12.peg.1419"/>
<dbReference type="HOGENOM" id="CLU_123265_0_1_6"/>
<dbReference type="OMA" id="GRRKNVW"/>
<dbReference type="PhylomeDB" id="P0A7L6"/>
<dbReference type="BioCyc" id="SENT99287:STM1336-MONOMER"/>
<dbReference type="Proteomes" id="UP000001014">
    <property type="component" value="Chromosome"/>
</dbReference>
<dbReference type="GO" id="GO:0022625">
    <property type="term" value="C:cytosolic large ribosomal subunit"/>
    <property type="evidence" value="ECO:0000318"/>
    <property type="project" value="GO_Central"/>
</dbReference>
<dbReference type="GO" id="GO:0019843">
    <property type="term" value="F:rRNA binding"/>
    <property type="evidence" value="ECO:0007669"/>
    <property type="project" value="UniProtKB-UniRule"/>
</dbReference>
<dbReference type="GO" id="GO:0003735">
    <property type="term" value="F:structural constituent of ribosome"/>
    <property type="evidence" value="ECO:0000318"/>
    <property type="project" value="GO_Central"/>
</dbReference>
<dbReference type="GO" id="GO:0000027">
    <property type="term" value="P:ribosomal large subunit assembly"/>
    <property type="evidence" value="ECO:0007669"/>
    <property type="project" value="UniProtKB-UniRule"/>
</dbReference>
<dbReference type="GO" id="GO:0006412">
    <property type="term" value="P:translation"/>
    <property type="evidence" value="ECO:0007669"/>
    <property type="project" value="InterPro"/>
</dbReference>
<dbReference type="CDD" id="cd07026">
    <property type="entry name" value="Ribosomal_L20"/>
    <property type="match status" value="1"/>
</dbReference>
<dbReference type="FunFam" id="1.10.1900.20:FF:000001">
    <property type="entry name" value="50S ribosomal protein L20"/>
    <property type="match status" value="1"/>
</dbReference>
<dbReference type="Gene3D" id="6.10.160.10">
    <property type="match status" value="1"/>
</dbReference>
<dbReference type="Gene3D" id="1.10.1900.20">
    <property type="entry name" value="Ribosomal protein L20"/>
    <property type="match status" value="1"/>
</dbReference>
<dbReference type="HAMAP" id="MF_00382">
    <property type="entry name" value="Ribosomal_bL20"/>
    <property type="match status" value="1"/>
</dbReference>
<dbReference type="InterPro" id="IPR005813">
    <property type="entry name" value="Ribosomal_bL20"/>
</dbReference>
<dbReference type="InterPro" id="IPR049946">
    <property type="entry name" value="RIBOSOMAL_L20_CS"/>
</dbReference>
<dbReference type="InterPro" id="IPR035566">
    <property type="entry name" value="Ribosomal_protein_bL20_C"/>
</dbReference>
<dbReference type="NCBIfam" id="TIGR01032">
    <property type="entry name" value="rplT_bact"/>
    <property type="match status" value="1"/>
</dbReference>
<dbReference type="PANTHER" id="PTHR10986">
    <property type="entry name" value="39S RIBOSOMAL PROTEIN L20"/>
    <property type="match status" value="1"/>
</dbReference>
<dbReference type="Pfam" id="PF00453">
    <property type="entry name" value="Ribosomal_L20"/>
    <property type="match status" value="1"/>
</dbReference>
<dbReference type="PRINTS" id="PR00062">
    <property type="entry name" value="RIBOSOMALL20"/>
</dbReference>
<dbReference type="SUPFAM" id="SSF74731">
    <property type="entry name" value="Ribosomal protein L20"/>
    <property type="match status" value="1"/>
</dbReference>
<dbReference type="PROSITE" id="PS00937">
    <property type="entry name" value="RIBOSOMAL_L20"/>
    <property type="match status" value="1"/>
</dbReference>
<accession>P0A7L6</accession>
<accession>P02421</accession>
<accession>Q47253</accession>
<name>RL20_SALTY</name>
<feature type="initiator methionine" description="Removed" evidence="1">
    <location>
        <position position="1"/>
    </location>
</feature>
<feature type="chain" id="PRO_0000177220" description="Large ribosomal subunit protein bL20">
    <location>
        <begin position="2"/>
        <end position="118"/>
    </location>
</feature>
<comment type="function">
    <text evidence="1">Binds directly to 23S ribosomal RNA and is necessary for the in vitro assembly process of the 50S ribosomal subunit. It is not involved in the protein synthesizing functions of that subunit (By similarity).</text>
</comment>
<comment type="similarity">
    <text evidence="2">Belongs to the bacterial ribosomal protein bL20 family.</text>
</comment>
<keyword id="KW-1185">Reference proteome</keyword>
<keyword id="KW-0687">Ribonucleoprotein</keyword>
<keyword id="KW-0689">Ribosomal protein</keyword>
<keyword id="KW-0694">RNA-binding</keyword>
<keyword id="KW-0699">rRNA-binding</keyword>
<protein>
    <recommendedName>
        <fullName evidence="2">Large ribosomal subunit protein bL20</fullName>
    </recommendedName>
    <alternativeName>
        <fullName>50S ribosomal protein L20</fullName>
    </alternativeName>
</protein>
<evidence type="ECO:0000250" key="1"/>
<evidence type="ECO:0000305" key="2"/>
<sequence length="118" mass="13497">MARVKRGVIARARHKKILKQAKGYYGARSRVYRVAFQAVIKAGQYAYRDRRQRKRQFRQLWIARINAAARQNGISYSKFINGLKKASVEIDRKILADIAVFDKVAFTALVEKAKAALA</sequence>